<keyword id="KW-0456">Lyase</keyword>
<keyword id="KW-0658">Purine biosynthesis</keyword>
<keyword id="KW-1185">Reference proteome</keyword>
<reference key="1">
    <citation type="journal article" date="2002" name="Proc. Natl. Acad. Sci. U.S.A.">
        <title>Genome sequence of Streptococcus mutans UA159, a cariogenic dental pathogen.</title>
        <authorList>
            <person name="Ajdic D.J."/>
            <person name="McShan W.M."/>
            <person name="McLaughlin R.E."/>
            <person name="Savic G."/>
            <person name="Chang J."/>
            <person name="Carson M.B."/>
            <person name="Primeaux C."/>
            <person name="Tian R."/>
            <person name="Kenton S."/>
            <person name="Jia H.G."/>
            <person name="Lin S.P."/>
            <person name="Qian Y."/>
            <person name="Li S."/>
            <person name="Zhu H."/>
            <person name="Najar F.Z."/>
            <person name="Lai H."/>
            <person name="White J."/>
            <person name="Roe B.A."/>
            <person name="Ferretti J.J."/>
        </authorList>
    </citation>
    <scope>NUCLEOTIDE SEQUENCE [LARGE SCALE GENOMIC DNA]</scope>
    <source>
        <strain>ATCC 700610 / UA159</strain>
    </source>
</reference>
<reference key="2">
    <citation type="submission" date="1996-10" db="EMBL/GenBank/DDBJ databases">
        <authorList>
            <person name="Peruzzi F."/>
            <person name="Piggot P.J."/>
            <person name="Daneo-Moore L."/>
        </authorList>
    </citation>
    <scope>NUCLEOTIDE SEQUENCE [GENOMIC DNA] OF 3-56</scope>
    <source>
        <strain>GS-5</strain>
    </source>
</reference>
<comment type="function">
    <text evidence="2">Catalyzes two reactions in de novo purine nucleotide biosynthesis. Catalyzes the breakdown of 5-aminoimidazole- (N-succinylocarboxamide) ribotide (SAICAR or 2-[5-amino-1-(5-phospho-beta-D-ribosyl)imidazole-4-carboxamido]succinate) to 5-aminoimidazole-4-carboxamide ribotide (AICAR or 5-amino-1-(5-phospho-beta-D-ribosyl)imidazole-4-carboxamide) and fumarate, and of adenylosuccinate (ADS or N(6)-(1,2-dicarboxyethyl)-AMP) to adenosine monophosphate (AMP) and fumarate.</text>
</comment>
<comment type="catalytic activity">
    <reaction evidence="2">
        <text>N(6)-(1,2-dicarboxyethyl)-AMP = fumarate + AMP</text>
        <dbReference type="Rhea" id="RHEA:16853"/>
        <dbReference type="ChEBI" id="CHEBI:29806"/>
        <dbReference type="ChEBI" id="CHEBI:57567"/>
        <dbReference type="ChEBI" id="CHEBI:456215"/>
        <dbReference type="EC" id="4.3.2.2"/>
    </reaction>
    <physiologicalReaction direction="left-to-right" evidence="2">
        <dbReference type="Rhea" id="RHEA:16854"/>
    </physiologicalReaction>
</comment>
<comment type="catalytic activity">
    <reaction evidence="2">
        <text>(2S)-2-[5-amino-1-(5-phospho-beta-D-ribosyl)imidazole-4-carboxamido]succinate = 5-amino-1-(5-phospho-beta-D-ribosyl)imidazole-4-carboxamide + fumarate</text>
        <dbReference type="Rhea" id="RHEA:23920"/>
        <dbReference type="ChEBI" id="CHEBI:29806"/>
        <dbReference type="ChEBI" id="CHEBI:58443"/>
        <dbReference type="ChEBI" id="CHEBI:58475"/>
        <dbReference type="EC" id="4.3.2.2"/>
    </reaction>
    <physiologicalReaction direction="left-to-right" evidence="2">
        <dbReference type="Rhea" id="RHEA:23921"/>
    </physiologicalReaction>
</comment>
<comment type="pathway">
    <text>Purine metabolism; AMP biosynthesis via de novo pathway; AMP from IMP: step 2/2.</text>
</comment>
<comment type="pathway">
    <text>Purine metabolism; IMP biosynthesis via de novo pathway; 5-amino-1-(5-phospho-D-ribosyl)imidazole-4-carboxamide from 5-amino-1-(5-phospho-D-ribosyl)imidazole-4-carboxylate: step 2/2.</text>
</comment>
<comment type="subunit">
    <text evidence="1">Homodimer and homotetramer. Residues from neighboring subunits contribute catalytic and substrate-binding residues to each active site (By similarity).</text>
</comment>
<comment type="similarity">
    <text evidence="3">Belongs to the lyase 1 family. Adenylosuccinate lyase subfamily.</text>
</comment>
<proteinExistence type="inferred from homology"/>
<protein>
    <recommendedName>
        <fullName>Adenylosuccinate lyase</fullName>
        <shortName>ASL</shortName>
        <ecNumber evidence="2">4.3.2.2</ecNumber>
    </recommendedName>
    <alternativeName>
        <fullName>Adenylosuccinase</fullName>
        <shortName>ASase</shortName>
    </alternativeName>
</protein>
<organism>
    <name type="scientific">Streptococcus mutans serotype c (strain ATCC 700610 / UA159)</name>
    <dbReference type="NCBI Taxonomy" id="210007"/>
    <lineage>
        <taxon>Bacteria</taxon>
        <taxon>Bacillati</taxon>
        <taxon>Bacillota</taxon>
        <taxon>Bacilli</taxon>
        <taxon>Lactobacillales</taxon>
        <taxon>Streptococcaceae</taxon>
        <taxon>Streptococcus</taxon>
    </lineage>
</organism>
<accession>P72478</accession>
<feature type="chain" id="PRO_0000137884" description="Adenylosuccinate lyase">
    <location>
        <begin position="1"/>
        <end position="432"/>
    </location>
</feature>
<feature type="active site" description="Proton donor/acceptor" evidence="2">
    <location>
        <position position="141"/>
    </location>
</feature>
<feature type="active site" description="Proton donor/acceptor" evidence="2">
    <location>
        <position position="262"/>
    </location>
</feature>
<feature type="binding site" evidence="2">
    <location>
        <begin position="4"/>
        <end position="5"/>
    </location>
    <ligand>
        <name>N(6)-(1,2-dicarboxyethyl)-AMP</name>
        <dbReference type="ChEBI" id="CHEBI:57567"/>
    </ligand>
</feature>
<feature type="binding site" evidence="2">
    <location>
        <begin position="67"/>
        <end position="69"/>
    </location>
    <ligand>
        <name>N(6)-(1,2-dicarboxyethyl)-AMP</name>
        <dbReference type="ChEBI" id="CHEBI:57567"/>
    </ligand>
</feature>
<feature type="binding site" evidence="2">
    <location>
        <begin position="93"/>
        <end position="94"/>
    </location>
    <ligand>
        <name>N(6)-(1,2-dicarboxyethyl)-AMP</name>
        <dbReference type="ChEBI" id="CHEBI:57567"/>
    </ligand>
</feature>
<feature type="binding site" evidence="2">
    <location>
        <position position="212"/>
    </location>
    <ligand>
        <name>N(6)-(1,2-dicarboxyethyl)-AMP</name>
        <dbReference type="ChEBI" id="CHEBI:57567"/>
    </ligand>
</feature>
<feature type="binding site" evidence="2">
    <location>
        <position position="263"/>
    </location>
    <ligand>
        <name>N(6)-(1,2-dicarboxyethyl)-AMP</name>
        <dbReference type="ChEBI" id="CHEBI:57567"/>
    </ligand>
</feature>
<feature type="binding site" evidence="2">
    <location>
        <begin position="268"/>
        <end position="270"/>
    </location>
    <ligand>
        <name>N(6)-(1,2-dicarboxyethyl)-AMP</name>
        <dbReference type="ChEBI" id="CHEBI:57567"/>
    </ligand>
</feature>
<feature type="binding site" evidence="2">
    <location>
        <position position="276"/>
    </location>
    <ligand>
        <name>N(6)-(1,2-dicarboxyethyl)-AMP</name>
        <dbReference type="ChEBI" id="CHEBI:57567"/>
    </ligand>
</feature>
<feature type="binding site" evidence="2">
    <location>
        <begin position="307"/>
        <end position="311"/>
    </location>
    <ligand>
        <name>N(6)-(1,2-dicarboxyethyl)-AMP</name>
        <dbReference type="ChEBI" id="CHEBI:57567"/>
    </ligand>
</feature>
<feature type="sequence conflict" description="In Ref. 2; AAB41194." evidence="3" ref="2">
    <original>A</original>
    <variation>V</variation>
    <location>
        <position position="46"/>
    </location>
</feature>
<dbReference type="EC" id="4.3.2.2" evidence="2"/>
<dbReference type="EMBL" id="AE014133">
    <property type="protein sequence ID" value="AAN57847.1"/>
    <property type="molecule type" value="Genomic_DNA"/>
</dbReference>
<dbReference type="EMBL" id="U75476">
    <property type="protein sequence ID" value="AAB41194.1"/>
    <property type="molecule type" value="Genomic_DNA"/>
</dbReference>
<dbReference type="RefSeq" id="NP_720541.1">
    <property type="nucleotide sequence ID" value="NC_004350.2"/>
</dbReference>
<dbReference type="RefSeq" id="WP_002263398.1">
    <property type="nucleotide sequence ID" value="NC_004350.2"/>
</dbReference>
<dbReference type="SMR" id="P72478"/>
<dbReference type="STRING" id="210007.SMU_59"/>
<dbReference type="KEGG" id="smu:SMU_59"/>
<dbReference type="PATRIC" id="fig|210007.7.peg.52"/>
<dbReference type="eggNOG" id="COG0015">
    <property type="taxonomic scope" value="Bacteria"/>
</dbReference>
<dbReference type="HOGENOM" id="CLU_030949_0_1_9"/>
<dbReference type="OrthoDB" id="9768878at2"/>
<dbReference type="PhylomeDB" id="P72478"/>
<dbReference type="UniPathway" id="UPA00074">
    <property type="reaction ID" value="UER00132"/>
</dbReference>
<dbReference type="UniPathway" id="UPA00075">
    <property type="reaction ID" value="UER00336"/>
</dbReference>
<dbReference type="Proteomes" id="UP000002512">
    <property type="component" value="Chromosome"/>
</dbReference>
<dbReference type="GO" id="GO:0005829">
    <property type="term" value="C:cytosol"/>
    <property type="evidence" value="ECO:0007669"/>
    <property type="project" value="TreeGrafter"/>
</dbReference>
<dbReference type="GO" id="GO:0070626">
    <property type="term" value="F:(S)-2-(5-amino-1-(5-phospho-D-ribosyl)imidazole-4-carboxamido) succinate lyase (fumarate-forming) activity"/>
    <property type="evidence" value="ECO:0007669"/>
    <property type="project" value="TreeGrafter"/>
</dbReference>
<dbReference type="GO" id="GO:0004018">
    <property type="term" value="F:N6-(1,2-dicarboxyethyl)AMP AMP-lyase (fumarate-forming) activity"/>
    <property type="evidence" value="ECO:0007669"/>
    <property type="project" value="InterPro"/>
</dbReference>
<dbReference type="GO" id="GO:0044208">
    <property type="term" value="P:'de novo' AMP biosynthetic process"/>
    <property type="evidence" value="ECO:0007669"/>
    <property type="project" value="UniProtKB-UniPathway"/>
</dbReference>
<dbReference type="GO" id="GO:0006189">
    <property type="term" value="P:'de novo' IMP biosynthetic process"/>
    <property type="evidence" value="ECO:0007669"/>
    <property type="project" value="UniProtKB-UniPathway"/>
</dbReference>
<dbReference type="CDD" id="cd01360">
    <property type="entry name" value="Adenylsuccinate_lyase_1"/>
    <property type="match status" value="1"/>
</dbReference>
<dbReference type="FunFam" id="1.10.275.10:FF:000006">
    <property type="entry name" value="Adenylosuccinate lyase"/>
    <property type="match status" value="1"/>
</dbReference>
<dbReference type="FunFam" id="1.10.40.30:FF:000007">
    <property type="entry name" value="Adenylosuccinate lyase"/>
    <property type="match status" value="1"/>
</dbReference>
<dbReference type="FunFam" id="1.20.200.10:FF:000008">
    <property type="entry name" value="Adenylosuccinate lyase"/>
    <property type="match status" value="1"/>
</dbReference>
<dbReference type="Gene3D" id="1.10.40.30">
    <property type="entry name" value="Fumarase/aspartase (C-terminal domain)"/>
    <property type="match status" value="1"/>
</dbReference>
<dbReference type="Gene3D" id="1.20.200.10">
    <property type="entry name" value="Fumarase/aspartase (Central domain)"/>
    <property type="match status" value="1"/>
</dbReference>
<dbReference type="Gene3D" id="1.10.275.10">
    <property type="entry name" value="Fumarase/aspartase (N-terminal domain)"/>
    <property type="match status" value="1"/>
</dbReference>
<dbReference type="InterPro" id="IPR019468">
    <property type="entry name" value="AdenyloSucc_lyase_C"/>
</dbReference>
<dbReference type="InterPro" id="IPR024083">
    <property type="entry name" value="Fumarase/histidase_N"/>
</dbReference>
<dbReference type="InterPro" id="IPR020557">
    <property type="entry name" value="Fumarate_lyase_CS"/>
</dbReference>
<dbReference type="InterPro" id="IPR000362">
    <property type="entry name" value="Fumarate_lyase_fam"/>
</dbReference>
<dbReference type="InterPro" id="IPR022761">
    <property type="entry name" value="Fumarate_lyase_N"/>
</dbReference>
<dbReference type="InterPro" id="IPR008948">
    <property type="entry name" value="L-Aspartase-like"/>
</dbReference>
<dbReference type="InterPro" id="IPR004769">
    <property type="entry name" value="Pur_lyase"/>
</dbReference>
<dbReference type="NCBIfam" id="TIGR00928">
    <property type="entry name" value="purB"/>
    <property type="match status" value="1"/>
</dbReference>
<dbReference type="PANTHER" id="PTHR43172">
    <property type="entry name" value="ADENYLOSUCCINATE LYASE"/>
    <property type="match status" value="1"/>
</dbReference>
<dbReference type="PANTHER" id="PTHR43172:SF1">
    <property type="entry name" value="ADENYLOSUCCINATE LYASE"/>
    <property type="match status" value="1"/>
</dbReference>
<dbReference type="Pfam" id="PF10397">
    <property type="entry name" value="ADSL_C"/>
    <property type="match status" value="1"/>
</dbReference>
<dbReference type="Pfam" id="PF00206">
    <property type="entry name" value="Lyase_1"/>
    <property type="match status" value="1"/>
</dbReference>
<dbReference type="PRINTS" id="PR00145">
    <property type="entry name" value="ARGSUCLYASE"/>
</dbReference>
<dbReference type="PRINTS" id="PR00149">
    <property type="entry name" value="FUMRATELYASE"/>
</dbReference>
<dbReference type="SMART" id="SM00998">
    <property type="entry name" value="ADSL_C"/>
    <property type="match status" value="1"/>
</dbReference>
<dbReference type="SUPFAM" id="SSF48557">
    <property type="entry name" value="L-aspartase-like"/>
    <property type="match status" value="1"/>
</dbReference>
<dbReference type="PROSITE" id="PS00163">
    <property type="entry name" value="FUMARATE_LYASES"/>
    <property type="match status" value="1"/>
</dbReference>
<evidence type="ECO:0000250" key="1"/>
<evidence type="ECO:0000250" key="2">
    <source>
        <dbReference type="UniProtKB" id="P0AB89"/>
    </source>
</evidence>
<evidence type="ECO:0000305" key="3"/>
<name>PUR8_STRMU</name>
<gene>
    <name type="primary">purB</name>
    <name type="ordered locus">SMU_59</name>
</gene>
<sequence length="432" mass="49377">MINRYSRPEMANIWSEENKYRAWLEVEILADEAWAELGEIPKEDVAKIREKADFDIDRILEIEQQTRHDVVAFTRAVSETLGEERKWVHFGLTSTDVVDTAYGYLYKQANAIIRKDLDNFLSIIADKAKEHKFTIMMGRTHGVHAEPTTFGLKLATWYSEMKRNIERFEHAAAGVEAGKISGAVGNFANIPPFVEKYVCDKLGIRAQEISTQVLPRDLHAEYFAVLASIATSIERMATEIRGLQKSEQREVEEFFAKGQKGSSAMPHKRNPIGSENMTGLARVIRGHMVTAYENVSLWHERDISHSSAERIIAPDTTILIDYMLNRFGNIVKNLTVFPENMKRNMGSTFGLIFSQRAMLTLIEKGMTREQAYDLVQPKTAQSWDNQVDFKPLLEADPEITSRLSQEEIDEIFNPVYYTKRVDEIFDRIGLGD</sequence>